<keyword id="KW-0002">3D-structure</keyword>
<keyword id="KW-0233">DNA recombination</keyword>
<keyword id="KW-0238">DNA-binding</keyword>
<keyword id="KW-1185">Reference proteome</keyword>
<keyword id="KW-0678">Repressor</keyword>
<keyword id="KW-0804">Transcription</keyword>
<keyword id="KW-0805">Transcription regulation</keyword>
<sequence length="66" mass="7678">MQHELQPDSLVDLKFIMADTGFGKTFIYDRIKSGDLPKAKVIHGRARWLYRDHCEFKNKLLSRANG</sequence>
<protein>
    <recommendedName>
        <fullName>Response regulator inhibitor for tor operon</fullName>
        <shortName>Tor inhibitor</shortName>
    </recommendedName>
</protein>
<gene>
    <name type="primary">torI</name>
    <name type="ordered locus">b4501</name>
    <name type="ordered locus">JW5387</name>
</gene>
<name>TORI_ECOLI</name>
<dbReference type="EMBL" id="U00096">
    <property type="protein sequence ID" value="ABD18695.1"/>
    <property type="molecule type" value="Genomic_DNA"/>
</dbReference>
<dbReference type="EMBL" id="AP009048">
    <property type="protein sequence ID" value="BAE76704.1"/>
    <property type="molecule type" value="Genomic_DNA"/>
</dbReference>
<dbReference type="RefSeq" id="WP_001163428.1">
    <property type="nucleotide sequence ID" value="NZ_SSUV01000027.1"/>
</dbReference>
<dbReference type="RefSeq" id="YP_588463.1">
    <property type="nucleotide sequence ID" value="NC_000913.3"/>
</dbReference>
<dbReference type="PDB" id="1Z4H">
    <property type="method" value="NMR"/>
    <property type="chains" value="A=1-66"/>
</dbReference>
<dbReference type="PDBsum" id="1Z4H"/>
<dbReference type="BMRB" id="Q2EES9"/>
<dbReference type="SMR" id="Q2EES9"/>
<dbReference type="BioGRID" id="4260552">
    <property type="interactions" value="15"/>
</dbReference>
<dbReference type="BioGRID" id="853375">
    <property type="interactions" value="1"/>
</dbReference>
<dbReference type="FunCoup" id="Q2EES9">
    <property type="interactions" value="6"/>
</dbReference>
<dbReference type="IntAct" id="Q2EES9">
    <property type="interactions" value="1"/>
</dbReference>
<dbReference type="STRING" id="511145.b4501"/>
<dbReference type="PaxDb" id="511145-b4501"/>
<dbReference type="EnsemblBacteria" id="ABD18695">
    <property type="protein sequence ID" value="ABD18695"/>
    <property type="gene ID" value="b4501"/>
</dbReference>
<dbReference type="GeneID" id="1450232"/>
<dbReference type="GeneID" id="93774774"/>
<dbReference type="KEGG" id="ecj:JW5387"/>
<dbReference type="KEGG" id="eco:b4501"/>
<dbReference type="KEGG" id="ecoc:C3026_13145"/>
<dbReference type="PATRIC" id="fig|1411691.4.peg.4366"/>
<dbReference type="eggNOG" id="COG3311">
    <property type="taxonomic scope" value="Bacteria"/>
</dbReference>
<dbReference type="HOGENOM" id="CLU_140176_22_2_6"/>
<dbReference type="InParanoid" id="Q2EES9"/>
<dbReference type="OMA" id="CAFKSKL"/>
<dbReference type="OrthoDB" id="6540549at2"/>
<dbReference type="BioCyc" id="EcoCyc:MONOMER0-1641"/>
<dbReference type="EvolutionaryTrace" id="Q2EES9"/>
<dbReference type="PRO" id="PR:Q2EES9"/>
<dbReference type="Proteomes" id="UP000000625">
    <property type="component" value="Chromosome"/>
</dbReference>
<dbReference type="GO" id="GO:0003677">
    <property type="term" value="F:DNA binding"/>
    <property type="evidence" value="ECO:0000314"/>
    <property type="project" value="EcoCyc"/>
</dbReference>
<dbReference type="GO" id="GO:0042802">
    <property type="term" value="F:identical protein binding"/>
    <property type="evidence" value="ECO:0000314"/>
    <property type="project" value="EcoCyc"/>
</dbReference>
<dbReference type="GO" id="GO:0043565">
    <property type="term" value="F:sequence-specific DNA binding"/>
    <property type="evidence" value="ECO:0000314"/>
    <property type="project" value="EcoCyc"/>
</dbReference>
<dbReference type="GO" id="GO:0006310">
    <property type="term" value="P:DNA recombination"/>
    <property type="evidence" value="ECO:0007669"/>
    <property type="project" value="UniProtKB-KW"/>
</dbReference>
<dbReference type="GO" id="GO:2000143">
    <property type="term" value="P:negative regulation of DNA-templated transcription initiation"/>
    <property type="evidence" value="ECO:0000314"/>
    <property type="project" value="EcoCyc"/>
</dbReference>
<dbReference type="Gene3D" id="1.10.238.160">
    <property type="match status" value="1"/>
</dbReference>
<organism>
    <name type="scientific">Escherichia coli (strain K12)</name>
    <dbReference type="NCBI Taxonomy" id="83333"/>
    <lineage>
        <taxon>Bacteria</taxon>
        <taxon>Pseudomonadati</taxon>
        <taxon>Pseudomonadota</taxon>
        <taxon>Gammaproteobacteria</taxon>
        <taxon>Enterobacterales</taxon>
        <taxon>Enterobacteriaceae</taxon>
        <taxon>Escherichia</taxon>
    </lineage>
</organism>
<feature type="chain" id="PRO_0000252144" description="Response regulator inhibitor for tor operon">
    <location>
        <begin position="1"/>
        <end position="66"/>
    </location>
</feature>
<feature type="mutagenesis site" description="Loss of all excisionase activity." evidence="2">
    <original>Y</original>
    <variation>F</variation>
    <variation>S</variation>
    <location>
        <position position="28"/>
    </location>
</feature>
<feature type="mutagenesis site" description="Retains approximately 10% excisionase activity." evidence="2">
    <original>R</original>
    <variation>K</variation>
    <variation>Q</variation>
    <location>
        <position position="45"/>
    </location>
</feature>
<feature type="strand" evidence="4">
    <location>
        <begin position="7"/>
        <end position="11"/>
    </location>
</feature>
<feature type="helix" evidence="4">
    <location>
        <begin position="13"/>
        <end position="20"/>
    </location>
</feature>
<feature type="helix" evidence="4">
    <location>
        <begin position="24"/>
        <end position="35"/>
    </location>
</feature>
<feature type="strand" evidence="4">
    <location>
        <begin position="39"/>
        <end position="44"/>
    </location>
</feature>
<feature type="strand" evidence="4">
    <location>
        <begin position="46"/>
        <end position="49"/>
    </location>
</feature>
<feature type="helix" evidence="4">
    <location>
        <begin position="50"/>
        <end position="63"/>
    </location>
</feature>
<comment type="function">
    <text evidence="1 2">Transcription inhibitory protein for the torCAD operon. Also acts as an excisionase and plays an essential role in the defective prophage CPS53 excision.</text>
</comment>
<comment type="subunit">
    <text evidence="1">Interacts with TorR. Binds to the effector domain of TorR. This interaction, which does not interfere with TorR DNA binding activity, probably prevents the recruitment of RNA polymerase to the torCAD promoter. Binds to DNA.</text>
</comment>
<comment type="interaction">
    <interactant intactId="EBI-9154838">
        <id>Q2EES9</id>
    </interactant>
    <interactant intactId="EBI-548621">
        <id>P76502</id>
        <label>sixA</label>
    </interactant>
    <organismsDiffer>false</organismsDiffer>
    <experiments>3</experiments>
</comment>
<comment type="similarity">
    <text evidence="3">Belongs to the phage AlpA excisionase family.</text>
</comment>
<accession>Q2EES9</accession>
<accession>Q2MAK2</accession>
<reference key="1">
    <citation type="journal article" date="1997" name="Science">
        <title>The complete genome sequence of Escherichia coli K-12.</title>
        <authorList>
            <person name="Blattner F.R."/>
            <person name="Plunkett G. III"/>
            <person name="Bloch C.A."/>
            <person name="Perna N.T."/>
            <person name="Burland V."/>
            <person name="Riley M."/>
            <person name="Collado-Vides J."/>
            <person name="Glasner J.D."/>
            <person name="Rode C.K."/>
            <person name="Mayhew G.F."/>
            <person name="Gregor J."/>
            <person name="Davis N.W."/>
            <person name="Kirkpatrick H.A."/>
            <person name="Goeden M.A."/>
            <person name="Rose D.J."/>
            <person name="Mau B."/>
            <person name="Shao Y."/>
        </authorList>
    </citation>
    <scope>NUCLEOTIDE SEQUENCE [LARGE SCALE GENOMIC DNA]</scope>
    <source>
        <strain>K12 / MG1655 / ATCC 47076</strain>
    </source>
</reference>
<reference key="2">
    <citation type="journal article" date="2006" name="Mol. Syst. Biol.">
        <title>Highly accurate genome sequences of Escherichia coli K-12 strains MG1655 and W3110.</title>
        <authorList>
            <person name="Hayashi K."/>
            <person name="Morooka N."/>
            <person name="Yamamoto Y."/>
            <person name="Fujita K."/>
            <person name="Isono K."/>
            <person name="Choi S."/>
            <person name="Ohtsubo E."/>
            <person name="Baba T."/>
            <person name="Wanner B.L."/>
            <person name="Mori H."/>
            <person name="Horiuchi T."/>
        </authorList>
    </citation>
    <scope>NUCLEOTIDE SEQUENCE [LARGE SCALE GENOMIC DNA]</scope>
    <source>
        <strain>K12 / W3110 / ATCC 27325 / DSM 5911</strain>
    </source>
</reference>
<reference key="3">
    <citation type="journal article" date="2004" name="Proc. Natl. Acad. Sci. U.S.A.">
        <title>TorI, a response regulator inhibitor of phage origin in Escherichia coli.</title>
        <authorList>
            <person name="Ansaldi M."/>
            <person name="Theraulaz L."/>
            <person name="Mejean V."/>
        </authorList>
    </citation>
    <scope>FUNCTION IN TOR OPERON REGULATION</scope>
    <scope>INTERACTION WITH TORR</scope>
</reference>
<reference key="4">
    <citation type="journal article" date="2005" name="J. Biol. Chem.">
        <title>Structural and genetic analyses reveal a key role in prophage excision for the TorI response regulator inhibitor.</title>
        <authorList>
            <person name="Elantak L."/>
            <person name="Ansaldi M."/>
            <person name="Guerlesquin F."/>
            <person name="Mejean V."/>
            <person name="Morelli X."/>
        </authorList>
    </citation>
    <scope>STRUCTURE BY NMR</scope>
    <scope>FUNCTION AS AN EXCISIONASE</scope>
    <scope>MUTAGENESIS OF TYR-28 AND ARG-45</scope>
</reference>
<proteinExistence type="evidence at protein level"/>
<evidence type="ECO:0000269" key="1">
    <source>
    </source>
</evidence>
<evidence type="ECO:0000269" key="2">
    <source>
    </source>
</evidence>
<evidence type="ECO:0000305" key="3"/>
<evidence type="ECO:0007829" key="4">
    <source>
        <dbReference type="PDB" id="1Z4H"/>
    </source>
</evidence>